<comment type="subcellular location">
    <subcellularLocation>
        <location evidence="5">Membrane</location>
        <topology evidence="5">Single-pass type I membrane protein</topology>
    </subcellularLocation>
</comment>
<comment type="similarity">
    <text evidence="5">Belongs to the LDLR family.</text>
</comment>
<gene>
    <name type="primary">Lrp11</name>
</gene>
<reference key="1">
    <citation type="journal article" date="2005" name="Science">
        <title>The transcriptional landscape of the mammalian genome.</title>
        <authorList>
            <person name="Carninci P."/>
            <person name="Kasukawa T."/>
            <person name="Katayama S."/>
            <person name="Gough J."/>
            <person name="Frith M.C."/>
            <person name="Maeda N."/>
            <person name="Oyama R."/>
            <person name="Ravasi T."/>
            <person name="Lenhard B."/>
            <person name="Wells C."/>
            <person name="Kodzius R."/>
            <person name="Shimokawa K."/>
            <person name="Bajic V.B."/>
            <person name="Brenner S.E."/>
            <person name="Batalov S."/>
            <person name="Forrest A.R."/>
            <person name="Zavolan M."/>
            <person name="Davis M.J."/>
            <person name="Wilming L.G."/>
            <person name="Aidinis V."/>
            <person name="Allen J.E."/>
            <person name="Ambesi-Impiombato A."/>
            <person name="Apweiler R."/>
            <person name="Aturaliya R.N."/>
            <person name="Bailey T.L."/>
            <person name="Bansal M."/>
            <person name="Baxter L."/>
            <person name="Beisel K.W."/>
            <person name="Bersano T."/>
            <person name="Bono H."/>
            <person name="Chalk A.M."/>
            <person name="Chiu K.P."/>
            <person name="Choudhary V."/>
            <person name="Christoffels A."/>
            <person name="Clutterbuck D.R."/>
            <person name="Crowe M.L."/>
            <person name="Dalla E."/>
            <person name="Dalrymple B.P."/>
            <person name="de Bono B."/>
            <person name="Della Gatta G."/>
            <person name="di Bernardo D."/>
            <person name="Down T."/>
            <person name="Engstrom P."/>
            <person name="Fagiolini M."/>
            <person name="Faulkner G."/>
            <person name="Fletcher C.F."/>
            <person name="Fukushima T."/>
            <person name="Furuno M."/>
            <person name="Futaki S."/>
            <person name="Gariboldi M."/>
            <person name="Georgii-Hemming P."/>
            <person name="Gingeras T.R."/>
            <person name="Gojobori T."/>
            <person name="Green R.E."/>
            <person name="Gustincich S."/>
            <person name="Harbers M."/>
            <person name="Hayashi Y."/>
            <person name="Hensch T.K."/>
            <person name="Hirokawa N."/>
            <person name="Hill D."/>
            <person name="Huminiecki L."/>
            <person name="Iacono M."/>
            <person name="Ikeo K."/>
            <person name="Iwama A."/>
            <person name="Ishikawa T."/>
            <person name="Jakt M."/>
            <person name="Kanapin A."/>
            <person name="Katoh M."/>
            <person name="Kawasawa Y."/>
            <person name="Kelso J."/>
            <person name="Kitamura H."/>
            <person name="Kitano H."/>
            <person name="Kollias G."/>
            <person name="Krishnan S.P."/>
            <person name="Kruger A."/>
            <person name="Kummerfeld S.K."/>
            <person name="Kurochkin I.V."/>
            <person name="Lareau L.F."/>
            <person name="Lazarevic D."/>
            <person name="Lipovich L."/>
            <person name="Liu J."/>
            <person name="Liuni S."/>
            <person name="McWilliam S."/>
            <person name="Madan Babu M."/>
            <person name="Madera M."/>
            <person name="Marchionni L."/>
            <person name="Matsuda H."/>
            <person name="Matsuzawa S."/>
            <person name="Miki H."/>
            <person name="Mignone F."/>
            <person name="Miyake S."/>
            <person name="Morris K."/>
            <person name="Mottagui-Tabar S."/>
            <person name="Mulder N."/>
            <person name="Nakano N."/>
            <person name="Nakauchi H."/>
            <person name="Ng P."/>
            <person name="Nilsson R."/>
            <person name="Nishiguchi S."/>
            <person name="Nishikawa S."/>
            <person name="Nori F."/>
            <person name="Ohara O."/>
            <person name="Okazaki Y."/>
            <person name="Orlando V."/>
            <person name="Pang K.C."/>
            <person name="Pavan W.J."/>
            <person name="Pavesi G."/>
            <person name="Pesole G."/>
            <person name="Petrovsky N."/>
            <person name="Piazza S."/>
            <person name="Reed J."/>
            <person name="Reid J.F."/>
            <person name="Ring B.Z."/>
            <person name="Ringwald M."/>
            <person name="Rost B."/>
            <person name="Ruan Y."/>
            <person name="Salzberg S.L."/>
            <person name="Sandelin A."/>
            <person name="Schneider C."/>
            <person name="Schoenbach C."/>
            <person name="Sekiguchi K."/>
            <person name="Semple C.A."/>
            <person name="Seno S."/>
            <person name="Sessa L."/>
            <person name="Sheng Y."/>
            <person name="Shibata Y."/>
            <person name="Shimada H."/>
            <person name="Shimada K."/>
            <person name="Silva D."/>
            <person name="Sinclair B."/>
            <person name="Sperling S."/>
            <person name="Stupka E."/>
            <person name="Sugiura K."/>
            <person name="Sultana R."/>
            <person name="Takenaka Y."/>
            <person name="Taki K."/>
            <person name="Tammoja K."/>
            <person name="Tan S.L."/>
            <person name="Tang S."/>
            <person name="Taylor M.S."/>
            <person name="Tegner J."/>
            <person name="Teichmann S.A."/>
            <person name="Ueda H.R."/>
            <person name="van Nimwegen E."/>
            <person name="Verardo R."/>
            <person name="Wei C.L."/>
            <person name="Yagi K."/>
            <person name="Yamanishi H."/>
            <person name="Zabarovsky E."/>
            <person name="Zhu S."/>
            <person name="Zimmer A."/>
            <person name="Hide W."/>
            <person name="Bult C."/>
            <person name="Grimmond S.M."/>
            <person name="Teasdale R.D."/>
            <person name="Liu E.T."/>
            <person name="Brusic V."/>
            <person name="Quackenbush J."/>
            <person name="Wahlestedt C."/>
            <person name="Mattick J.S."/>
            <person name="Hume D.A."/>
            <person name="Kai C."/>
            <person name="Sasaki D."/>
            <person name="Tomaru Y."/>
            <person name="Fukuda S."/>
            <person name="Kanamori-Katayama M."/>
            <person name="Suzuki M."/>
            <person name="Aoki J."/>
            <person name="Arakawa T."/>
            <person name="Iida J."/>
            <person name="Imamura K."/>
            <person name="Itoh M."/>
            <person name="Kato T."/>
            <person name="Kawaji H."/>
            <person name="Kawagashira N."/>
            <person name="Kawashima T."/>
            <person name="Kojima M."/>
            <person name="Kondo S."/>
            <person name="Konno H."/>
            <person name="Nakano K."/>
            <person name="Ninomiya N."/>
            <person name="Nishio T."/>
            <person name="Okada M."/>
            <person name="Plessy C."/>
            <person name="Shibata K."/>
            <person name="Shiraki T."/>
            <person name="Suzuki S."/>
            <person name="Tagami M."/>
            <person name="Waki K."/>
            <person name="Watahiki A."/>
            <person name="Okamura-Oho Y."/>
            <person name="Suzuki H."/>
            <person name="Kawai J."/>
            <person name="Hayashizaki Y."/>
        </authorList>
    </citation>
    <scope>NUCLEOTIDE SEQUENCE [LARGE SCALE MRNA]</scope>
    <source>
        <strain>C57BL/6J</strain>
        <tissue>Bone</tissue>
        <tissue>Cerebellum</tissue>
    </source>
</reference>
<reference key="2">
    <citation type="journal article" date="2004" name="Genome Res.">
        <title>The status, quality, and expansion of the NIH full-length cDNA project: the Mammalian Gene Collection (MGC).</title>
        <authorList>
            <consortium name="The MGC Project Team"/>
        </authorList>
    </citation>
    <scope>NUCLEOTIDE SEQUENCE [LARGE SCALE MRNA]</scope>
    <source>
        <strain>C57BL/6J</strain>
        <tissue>Brain</tissue>
    </source>
</reference>
<reference key="3">
    <citation type="journal article" date="2010" name="Cell">
        <title>A tissue-specific atlas of mouse protein phosphorylation and expression.</title>
        <authorList>
            <person name="Huttlin E.L."/>
            <person name="Jedrychowski M.P."/>
            <person name="Elias J.E."/>
            <person name="Goswami T."/>
            <person name="Rad R."/>
            <person name="Beausoleil S.A."/>
            <person name="Villen J."/>
            <person name="Haas W."/>
            <person name="Sowa M.E."/>
            <person name="Gygi S.P."/>
        </authorList>
    </citation>
    <scope>PHOSPHORYLATION [LARGE SCALE ANALYSIS] AT SER-474</scope>
    <scope>IDENTIFICATION BY MASS SPECTROMETRY [LARGE SCALE ANALYSIS]</scope>
    <source>
        <tissue>Brain</tissue>
    </source>
</reference>
<dbReference type="EMBL" id="AK036676">
    <property type="protein sequence ID" value="BAC29532.1"/>
    <property type="molecule type" value="mRNA"/>
</dbReference>
<dbReference type="EMBL" id="AK048919">
    <property type="protein sequence ID" value="BAC33492.1"/>
    <property type="molecule type" value="mRNA"/>
</dbReference>
<dbReference type="EMBL" id="BC059874">
    <property type="status" value="NOT_ANNOTATED_CDS"/>
    <property type="molecule type" value="mRNA"/>
</dbReference>
<dbReference type="CCDS" id="CCDS23686.1"/>
<dbReference type="RefSeq" id="NP_766372.1">
    <property type="nucleotide sequence ID" value="NM_172784.4"/>
</dbReference>
<dbReference type="FunCoup" id="Q8CB67">
    <property type="interactions" value="40"/>
</dbReference>
<dbReference type="STRING" id="10090.ENSMUSP00000019931"/>
<dbReference type="GlyCosmos" id="Q8CB67">
    <property type="glycosylation" value="3 sites, No reported glycans"/>
</dbReference>
<dbReference type="GlyGen" id="Q8CB67">
    <property type="glycosylation" value="3 sites, 3 N-linked glycans (3 sites)"/>
</dbReference>
<dbReference type="iPTMnet" id="Q8CB67"/>
<dbReference type="PhosphoSitePlus" id="Q8CB67"/>
<dbReference type="PaxDb" id="10090-ENSMUSP00000019931"/>
<dbReference type="ProteomicsDB" id="292111"/>
<dbReference type="Antibodypedia" id="33293">
    <property type="antibodies" value="81 antibodies from 25 providers"/>
</dbReference>
<dbReference type="DNASU" id="237253"/>
<dbReference type="Ensembl" id="ENSMUST00000019931.12">
    <property type="protein sequence ID" value="ENSMUSP00000019931.6"/>
    <property type="gene ID" value="ENSMUSG00000019796.13"/>
</dbReference>
<dbReference type="GeneID" id="237253"/>
<dbReference type="KEGG" id="mmu:237253"/>
<dbReference type="UCSC" id="uc007ehw.2">
    <property type="organism name" value="mouse"/>
</dbReference>
<dbReference type="AGR" id="MGI:2442989"/>
<dbReference type="CTD" id="84918"/>
<dbReference type="MGI" id="MGI:2442989">
    <property type="gene designation" value="Lrp11"/>
</dbReference>
<dbReference type="VEuPathDB" id="HostDB:ENSMUSG00000019796"/>
<dbReference type="eggNOG" id="ENOG502QW7V">
    <property type="taxonomic scope" value="Eukaryota"/>
</dbReference>
<dbReference type="GeneTree" id="ENSGT00940000161275"/>
<dbReference type="HOGENOM" id="CLU_042674_1_0_1"/>
<dbReference type="InParanoid" id="Q8CB67"/>
<dbReference type="OMA" id="HACCAQP"/>
<dbReference type="OrthoDB" id="10037294at2759"/>
<dbReference type="PhylomeDB" id="Q8CB67"/>
<dbReference type="TreeFam" id="TF325867"/>
<dbReference type="BioGRID-ORCS" id="237253">
    <property type="hits" value="1 hit in 76 CRISPR screens"/>
</dbReference>
<dbReference type="ChiTaRS" id="Lrp11">
    <property type="organism name" value="mouse"/>
</dbReference>
<dbReference type="PRO" id="PR:Q8CB67"/>
<dbReference type="Proteomes" id="UP000000589">
    <property type="component" value="Chromosome 10"/>
</dbReference>
<dbReference type="RNAct" id="Q8CB67">
    <property type="molecule type" value="protein"/>
</dbReference>
<dbReference type="Bgee" id="ENSMUSG00000019796">
    <property type="expression patterns" value="Expressed in dentate gyrus of hippocampal formation granule cell and 92 other cell types or tissues"/>
</dbReference>
<dbReference type="ExpressionAtlas" id="Q8CB67">
    <property type="expression patterns" value="baseline and differential"/>
</dbReference>
<dbReference type="GO" id="GO:0016020">
    <property type="term" value="C:membrane"/>
    <property type="evidence" value="ECO:0007669"/>
    <property type="project" value="UniProtKB-SubCell"/>
</dbReference>
<dbReference type="GO" id="GO:0051219">
    <property type="term" value="F:phosphoprotein binding"/>
    <property type="evidence" value="ECO:0007669"/>
    <property type="project" value="Ensembl"/>
</dbReference>
<dbReference type="GO" id="GO:0006897">
    <property type="term" value="P:endocytosis"/>
    <property type="evidence" value="ECO:0007669"/>
    <property type="project" value="UniProtKB-KW"/>
</dbReference>
<dbReference type="GO" id="GO:0033555">
    <property type="term" value="P:multicellular organismal response to stress"/>
    <property type="evidence" value="ECO:0000270"/>
    <property type="project" value="AgBase"/>
</dbReference>
<dbReference type="GO" id="GO:0009409">
    <property type="term" value="P:response to cold"/>
    <property type="evidence" value="ECO:0000270"/>
    <property type="project" value="AgBase"/>
</dbReference>
<dbReference type="GO" id="GO:0009408">
    <property type="term" value="P:response to heat"/>
    <property type="evidence" value="ECO:0000270"/>
    <property type="project" value="AgBase"/>
</dbReference>
<dbReference type="GO" id="GO:0035902">
    <property type="term" value="P:response to immobilization stress"/>
    <property type="evidence" value="ECO:0000270"/>
    <property type="project" value="AgBase"/>
</dbReference>
<dbReference type="GO" id="GO:0009612">
    <property type="term" value="P:response to mechanical stimulus"/>
    <property type="evidence" value="ECO:0000270"/>
    <property type="project" value="AgBase"/>
</dbReference>
<dbReference type="GO" id="GO:0042594">
    <property type="term" value="P:response to starvation"/>
    <property type="evidence" value="ECO:0000270"/>
    <property type="project" value="AgBase"/>
</dbReference>
<dbReference type="GO" id="GO:0009414">
    <property type="term" value="P:response to water deprivation"/>
    <property type="evidence" value="ECO:0000270"/>
    <property type="project" value="AgBase"/>
</dbReference>
<dbReference type="CDD" id="cd00112">
    <property type="entry name" value="LDLa"/>
    <property type="match status" value="1"/>
</dbReference>
<dbReference type="CDD" id="cd00146">
    <property type="entry name" value="PKD"/>
    <property type="match status" value="1"/>
</dbReference>
<dbReference type="FunFam" id="2.60.40.10:FF:000061">
    <property type="entry name" value="Dyslexia-associated protein KIAA0319 homolog"/>
    <property type="match status" value="1"/>
</dbReference>
<dbReference type="FunFam" id="4.10.400.10:FF:000067">
    <property type="entry name" value="Serine peptidase inhibitor, Kunitz type 1"/>
    <property type="match status" value="1"/>
</dbReference>
<dbReference type="Gene3D" id="2.60.40.10">
    <property type="entry name" value="Immunoglobulins"/>
    <property type="match status" value="1"/>
</dbReference>
<dbReference type="Gene3D" id="4.10.400.10">
    <property type="entry name" value="Low-density Lipoprotein Receptor"/>
    <property type="match status" value="1"/>
</dbReference>
<dbReference type="InterPro" id="IPR013783">
    <property type="entry name" value="Ig-like_fold"/>
</dbReference>
<dbReference type="InterPro" id="IPR036055">
    <property type="entry name" value="LDL_receptor-like_sf"/>
</dbReference>
<dbReference type="InterPro" id="IPR023415">
    <property type="entry name" value="LDLR_class-A_CS"/>
</dbReference>
<dbReference type="InterPro" id="IPR002172">
    <property type="entry name" value="LDrepeatLR_classA_rpt"/>
</dbReference>
<dbReference type="InterPro" id="IPR013980">
    <property type="entry name" value="MANSC_dom"/>
</dbReference>
<dbReference type="InterPro" id="IPR011106">
    <property type="entry name" value="MANSC_N"/>
</dbReference>
<dbReference type="InterPro" id="IPR035986">
    <property type="entry name" value="PKD_dom_sf"/>
</dbReference>
<dbReference type="PANTHER" id="PTHR46876">
    <property type="entry name" value="LOW-DENSITY LIPOPROTEIN RECEPTOR-RELATED PROTEIN 11"/>
    <property type="match status" value="1"/>
</dbReference>
<dbReference type="PANTHER" id="PTHR46876:SF1">
    <property type="entry name" value="LOW-DENSITY LIPOPROTEIN RECEPTOR-RELATED PROTEIN 11"/>
    <property type="match status" value="1"/>
</dbReference>
<dbReference type="Pfam" id="PF22352">
    <property type="entry name" value="K319L-like_PKD"/>
    <property type="match status" value="1"/>
</dbReference>
<dbReference type="Pfam" id="PF00057">
    <property type="entry name" value="Ldl_recept_a"/>
    <property type="match status" value="1"/>
</dbReference>
<dbReference type="Pfam" id="PF07502">
    <property type="entry name" value="MANEC"/>
    <property type="match status" value="1"/>
</dbReference>
<dbReference type="SMART" id="SM00192">
    <property type="entry name" value="LDLa"/>
    <property type="match status" value="1"/>
</dbReference>
<dbReference type="SMART" id="SM00765">
    <property type="entry name" value="MANEC"/>
    <property type="match status" value="1"/>
</dbReference>
<dbReference type="SUPFAM" id="SSF57424">
    <property type="entry name" value="LDL receptor-like module"/>
    <property type="match status" value="1"/>
</dbReference>
<dbReference type="SUPFAM" id="SSF49299">
    <property type="entry name" value="PKD domain"/>
    <property type="match status" value="1"/>
</dbReference>
<dbReference type="PROSITE" id="PS01209">
    <property type="entry name" value="LDLRA_1"/>
    <property type="match status" value="1"/>
</dbReference>
<dbReference type="PROSITE" id="PS50068">
    <property type="entry name" value="LDLRA_2"/>
    <property type="match status" value="1"/>
</dbReference>
<dbReference type="PROSITE" id="PS50986">
    <property type="entry name" value="MANSC"/>
    <property type="match status" value="1"/>
</dbReference>
<sequence length="483" mass="51814">MATRGGGPGPGFRHRALRGLLLLCLWLPGSRPGEPAAPSSGVDRLLQDFRRQLQRARPREELEPELLGGPREDCPGAGGTAVYRAVPDTIIRTQDSIAAGASFLRAPGSVRGWRQCVTACCSEPSCSVAVVQLPRGPSVPAPMPAPRCYLFNCTARGRSVCKFAPLRGYRTYTLSRAEDAAGIPPRPDEDKPPVSKAGKDVVLHLPTDGVVLDGRESSDDHAIVLYEWTLQQGDPSSVDMKVPQPGTLRLSRLKEGAYIFQLTVTDSVGQRSSDNVSVTVLPRPYSTGGCSSACSRYHFFCDSGCCIDIALACDGVRQCPDGSDEDFCQNLALDRKLVTHTVATSAQPGAMGLNEGEGDPKLEKSQRATTHNQPATVSHPETRIHSTQKAPESQINPVQPDSNSSGKNQEEGNYDLKSKSGQAGGEHPAPEAGAVLPLALGLAITVLLLLMVTCRLRLVKQKLKKARPITSEESDYLINGMYL</sequence>
<proteinExistence type="evidence at protein level"/>
<accession>Q8CB67</accession>
<accession>Q8C7Y7</accession>
<feature type="signal peptide" evidence="1">
    <location>
        <begin position="1"/>
        <end position="32"/>
    </location>
</feature>
<feature type="chain" id="PRO_0000017338" description="Low-density lipoprotein receptor-related protein 11">
    <location>
        <begin position="33"/>
        <end position="483"/>
    </location>
</feature>
<feature type="topological domain" description="Extracellular" evidence="1">
    <location>
        <begin position="33"/>
        <end position="433"/>
    </location>
</feature>
<feature type="transmembrane region" description="Helical" evidence="1">
    <location>
        <begin position="434"/>
        <end position="456"/>
    </location>
</feature>
<feature type="topological domain" description="Cytoplasmic" evidence="1">
    <location>
        <begin position="457"/>
        <end position="483"/>
    </location>
</feature>
<feature type="domain" description="MANSC" evidence="3">
    <location>
        <begin position="85"/>
        <end position="172"/>
    </location>
</feature>
<feature type="domain" description="PKD">
    <location>
        <begin position="193"/>
        <end position="287"/>
    </location>
</feature>
<feature type="domain" description="LDL-receptor class A" evidence="2">
    <location>
        <begin position="293"/>
        <end position="329"/>
    </location>
</feature>
<feature type="region of interest" description="Disordered" evidence="4">
    <location>
        <begin position="346"/>
        <end position="428"/>
    </location>
</feature>
<feature type="compositionally biased region" description="Polar residues" evidence="4">
    <location>
        <begin position="367"/>
        <end position="376"/>
    </location>
</feature>
<feature type="compositionally biased region" description="Polar residues" evidence="4">
    <location>
        <begin position="385"/>
        <end position="407"/>
    </location>
</feature>
<feature type="compositionally biased region" description="Basic and acidic residues" evidence="4">
    <location>
        <begin position="408"/>
        <end position="418"/>
    </location>
</feature>
<feature type="modified residue" description="Phosphoserine" evidence="6">
    <location>
        <position position="474"/>
    </location>
</feature>
<feature type="glycosylation site" description="N-linked (GlcNAc...) asparagine" evidence="1">
    <location>
        <position position="152"/>
    </location>
</feature>
<feature type="glycosylation site" description="N-linked (GlcNAc...) asparagine" evidence="1">
    <location>
        <position position="275"/>
    </location>
</feature>
<feature type="glycosylation site" description="N-linked (GlcNAc...) asparagine" evidence="1">
    <location>
        <position position="403"/>
    </location>
</feature>
<feature type="disulfide bond" evidence="2">
    <location>
        <begin position="294"/>
        <end position="306"/>
    </location>
</feature>
<feature type="disulfide bond" evidence="2">
    <location>
        <begin position="301"/>
        <end position="319"/>
    </location>
</feature>
<feature type="disulfide bond" evidence="2">
    <location>
        <begin position="313"/>
        <end position="328"/>
    </location>
</feature>
<feature type="sequence conflict" description="In Ref. 1; BAC33492." evidence="5" ref="1">
    <original>L</original>
    <variation>H</variation>
    <location>
        <position position="25"/>
    </location>
</feature>
<feature type="sequence conflict" description="In Ref. 1; BAC33492." evidence="5" ref="1">
    <original>K</original>
    <variation>KLFVWQ</variation>
    <location>
        <position position="241"/>
    </location>
</feature>
<feature type="sequence conflict" description="In Ref. 2; BC059874." evidence="5" ref="2">
    <original>DSNSSGKNQEEGNYDLKSKSGQAGGEHPAPEAGAVLPLALGLAITVLLLLMVTCRLRLVKQKLKKARPITSEESDYLINGMYL</original>
    <variation>AIPQERTKKKEIMISSPRVAKQEGSTRPRKQVRCYLWH</variation>
    <location>
        <begin position="401"/>
        <end position="483"/>
    </location>
</feature>
<evidence type="ECO:0000255" key="1"/>
<evidence type="ECO:0000255" key="2">
    <source>
        <dbReference type="PROSITE-ProRule" id="PRU00124"/>
    </source>
</evidence>
<evidence type="ECO:0000255" key="3">
    <source>
        <dbReference type="PROSITE-ProRule" id="PRU00341"/>
    </source>
</evidence>
<evidence type="ECO:0000256" key="4">
    <source>
        <dbReference type="SAM" id="MobiDB-lite"/>
    </source>
</evidence>
<evidence type="ECO:0000305" key="5"/>
<evidence type="ECO:0007744" key="6">
    <source>
    </source>
</evidence>
<organism>
    <name type="scientific">Mus musculus</name>
    <name type="common">Mouse</name>
    <dbReference type="NCBI Taxonomy" id="10090"/>
    <lineage>
        <taxon>Eukaryota</taxon>
        <taxon>Metazoa</taxon>
        <taxon>Chordata</taxon>
        <taxon>Craniata</taxon>
        <taxon>Vertebrata</taxon>
        <taxon>Euteleostomi</taxon>
        <taxon>Mammalia</taxon>
        <taxon>Eutheria</taxon>
        <taxon>Euarchontoglires</taxon>
        <taxon>Glires</taxon>
        <taxon>Rodentia</taxon>
        <taxon>Myomorpha</taxon>
        <taxon>Muroidea</taxon>
        <taxon>Muridae</taxon>
        <taxon>Murinae</taxon>
        <taxon>Mus</taxon>
        <taxon>Mus</taxon>
    </lineage>
</organism>
<protein>
    <recommendedName>
        <fullName>Low-density lipoprotein receptor-related protein 11</fullName>
        <shortName>LRP-11</shortName>
    </recommendedName>
</protein>
<keyword id="KW-1015">Disulfide bond</keyword>
<keyword id="KW-0254">Endocytosis</keyword>
<keyword id="KW-0325">Glycoprotein</keyword>
<keyword id="KW-0472">Membrane</keyword>
<keyword id="KW-0597">Phosphoprotein</keyword>
<keyword id="KW-0675">Receptor</keyword>
<keyword id="KW-1185">Reference proteome</keyword>
<keyword id="KW-0732">Signal</keyword>
<keyword id="KW-0812">Transmembrane</keyword>
<keyword id="KW-1133">Transmembrane helix</keyword>
<name>LRP11_MOUSE</name>